<accession>P9WPY7</accession>
<accession>L0TA28</accession>
<accession>P0A4Z0</accession>
<accession>P94994</accession>
<keyword id="KW-0002">3D-structure</keyword>
<keyword id="KW-0028">Amino-acid biosynthesis</keyword>
<keyword id="KW-0055">Arginine biosynthesis</keyword>
<keyword id="KW-0963">Cytoplasm</keyword>
<keyword id="KW-0456">Lyase</keyword>
<keyword id="KW-1185">Reference proteome</keyword>
<feature type="chain" id="PRO_0000137793" description="Argininosuccinate lyase">
    <location>
        <begin position="1"/>
        <end position="470"/>
    </location>
</feature>
<feature type="helix" evidence="2">
    <location>
        <begin position="19"/>
        <end position="25"/>
    </location>
</feature>
<feature type="helix" evidence="2">
    <location>
        <begin position="28"/>
        <end position="31"/>
    </location>
</feature>
<feature type="helix" evidence="2">
    <location>
        <begin position="32"/>
        <end position="34"/>
    </location>
</feature>
<feature type="helix" evidence="2">
    <location>
        <begin position="35"/>
        <end position="51"/>
    </location>
</feature>
<feature type="helix" evidence="2">
    <location>
        <begin position="57"/>
        <end position="75"/>
    </location>
</feature>
<feature type="helix" evidence="2">
    <location>
        <begin position="88"/>
        <end position="106"/>
    </location>
</feature>
<feature type="helix" evidence="2">
    <location>
        <begin position="107"/>
        <end position="109"/>
    </location>
</feature>
<feature type="helix" evidence="2">
    <location>
        <begin position="115"/>
        <end position="150"/>
    </location>
</feature>
<feature type="strand" evidence="2">
    <location>
        <begin position="155"/>
        <end position="160"/>
    </location>
</feature>
<feature type="strand" evidence="2">
    <location>
        <begin position="163"/>
        <end position="169"/>
    </location>
</feature>
<feature type="helix" evidence="2">
    <location>
        <begin position="170"/>
        <end position="175"/>
    </location>
</feature>
<feature type="helix" evidence="2">
    <location>
        <begin position="178"/>
        <end position="195"/>
    </location>
</feature>
<feature type="turn" evidence="2">
    <location>
        <begin position="203"/>
        <end position="206"/>
    </location>
</feature>
<feature type="helix" evidence="2">
    <location>
        <begin position="214"/>
        <end position="221"/>
    </location>
</feature>
<feature type="strand" evidence="2">
    <location>
        <begin position="224"/>
        <end position="226"/>
    </location>
</feature>
<feature type="helix" evidence="2">
    <location>
        <begin position="230"/>
        <end position="235"/>
    </location>
</feature>
<feature type="helix" evidence="2">
    <location>
        <begin position="238"/>
        <end position="265"/>
    </location>
</feature>
<feature type="turn" evidence="2">
    <location>
        <begin position="267"/>
        <end position="269"/>
    </location>
</feature>
<feature type="strand" evidence="2">
    <location>
        <begin position="271"/>
        <end position="273"/>
    </location>
</feature>
<feature type="helix" evidence="2">
    <location>
        <begin position="276"/>
        <end position="278"/>
    </location>
</feature>
<feature type="strand" evidence="2">
    <location>
        <begin position="279"/>
        <end position="281"/>
    </location>
</feature>
<feature type="strand" evidence="2">
    <location>
        <begin position="283"/>
        <end position="285"/>
    </location>
</feature>
<feature type="helix" evidence="2">
    <location>
        <begin position="292"/>
        <end position="315"/>
    </location>
</feature>
<feature type="helix" evidence="2">
    <location>
        <begin position="324"/>
        <end position="329"/>
    </location>
</feature>
<feature type="helix" evidence="2">
    <location>
        <begin position="330"/>
        <end position="352"/>
    </location>
</feature>
<feature type="helix" evidence="2">
    <location>
        <begin position="358"/>
        <end position="364"/>
    </location>
</feature>
<feature type="helix" evidence="2">
    <location>
        <begin position="367"/>
        <end position="370"/>
    </location>
</feature>
<feature type="helix" evidence="2">
    <location>
        <begin position="371"/>
        <end position="381"/>
    </location>
</feature>
<feature type="helix" evidence="2">
    <location>
        <begin position="386"/>
        <end position="403"/>
    </location>
</feature>
<feature type="helix" evidence="2">
    <location>
        <begin position="407"/>
        <end position="409"/>
    </location>
</feature>
<feature type="helix" evidence="2">
    <location>
        <begin position="412"/>
        <end position="418"/>
    </location>
</feature>
<feature type="helix" evidence="2">
    <location>
        <begin position="424"/>
        <end position="429"/>
    </location>
</feature>
<feature type="helix" evidence="2">
    <location>
        <begin position="432"/>
        <end position="437"/>
    </location>
</feature>
<feature type="helix" evidence="2">
    <location>
        <begin position="447"/>
        <end position="468"/>
    </location>
</feature>
<comment type="catalytic activity">
    <reaction evidence="1">
        <text>2-(N(omega)-L-arginino)succinate = fumarate + L-arginine</text>
        <dbReference type="Rhea" id="RHEA:24020"/>
        <dbReference type="ChEBI" id="CHEBI:29806"/>
        <dbReference type="ChEBI" id="CHEBI:32682"/>
        <dbReference type="ChEBI" id="CHEBI:57472"/>
        <dbReference type="EC" id="4.3.2.1"/>
    </reaction>
</comment>
<comment type="pathway">
    <text evidence="1">Amino-acid biosynthesis; L-arginine biosynthesis; L-arginine from L-ornithine and carbamoyl phosphate: step 3/3.</text>
</comment>
<comment type="subcellular location">
    <subcellularLocation>
        <location evidence="1">Cytoplasm</location>
    </subcellularLocation>
</comment>
<comment type="similarity">
    <text evidence="1">Belongs to the lyase 1 family. Argininosuccinate lyase subfamily.</text>
</comment>
<evidence type="ECO:0000255" key="1">
    <source>
        <dbReference type="HAMAP-Rule" id="MF_00006"/>
    </source>
</evidence>
<evidence type="ECO:0007829" key="2">
    <source>
        <dbReference type="PDB" id="6IG5"/>
    </source>
</evidence>
<protein>
    <recommendedName>
        <fullName evidence="1">Argininosuccinate lyase</fullName>
        <shortName evidence="1">ASAL</shortName>
        <ecNumber evidence="1">4.3.2.1</ecNumber>
    </recommendedName>
    <alternativeName>
        <fullName evidence="1">Arginosuccinase</fullName>
    </alternativeName>
</protein>
<sequence>MSTNEGSLWGGRFAGGPSDALAALSKSTHFDWVLAPYDLTASRAHTMVLFRAGLLTEEQRDGLLAGLDSLAQDVADGSFGPLVTDEDVHAALERGLIDRVGPDLGGRLRAGRSRNDQVAALFRMWLRDAVRRVATGVLDVVGALAEQAAAHPSAIMPGKTHLQSAQPILLAHHLLAHAHPLLRDLDRIVDFDKRAAVSPYGSGALAGSSLGLDPDAIAADLGFSAAADNSVDATAARDFAAEAAFVFAMIAVDLSRLAEDIIVWSSTEFGYVTLHDSWSTGSSIMPQKKNPDIAELARGKSGRLIGNLAGLLATLKAQPLAYNRDLQEDKEPVFDSVAQLELLLPAMAGLVASLTFNVQRMAELAPAGYTLATDLAEWLVRQGVPFRSAHEAAGAAVRAAEQRGVGLQELTDDELAAISPELTPQVREVLTIEGSVSARDCRGGTAPGRVAEQLNAIGEAAERLRRQLVR</sequence>
<dbReference type="EC" id="4.3.2.1" evidence="1"/>
<dbReference type="EMBL" id="AL123456">
    <property type="protein sequence ID" value="CCP44424.1"/>
    <property type="molecule type" value="Genomic_DNA"/>
</dbReference>
<dbReference type="PIR" id="F70621">
    <property type="entry name" value="F70621"/>
</dbReference>
<dbReference type="RefSeq" id="NP_216175.1">
    <property type="nucleotide sequence ID" value="NC_000962.3"/>
</dbReference>
<dbReference type="RefSeq" id="WP_003408180.1">
    <property type="nucleotide sequence ID" value="NZ_NVQJ01000069.1"/>
</dbReference>
<dbReference type="PDB" id="6IEM">
    <property type="method" value="X-ray"/>
    <property type="resolution" value="2.20 A"/>
    <property type="chains" value="A/B/C/D/E/F/G/H=1-470"/>
</dbReference>
<dbReference type="PDB" id="6IEN">
    <property type="method" value="X-ray"/>
    <property type="resolution" value="2.70 A"/>
    <property type="chains" value="A/B/C/D=1-470"/>
</dbReference>
<dbReference type="PDB" id="6IG5">
    <property type="method" value="X-ray"/>
    <property type="resolution" value="2.08 A"/>
    <property type="chains" value="A/B/C/D=1-470"/>
</dbReference>
<dbReference type="PDB" id="6IGA">
    <property type="method" value="X-ray"/>
    <property type="resolution" value="2.78 A"/>
    <property type="chains" value="A/B/C/D=1-470"/>
</dbReference>
<dbReference type="PDBsum" id="6IEM"/>
<dbReference type="PDBsum" id="6IEN"/>
<dbReference type="PDBsum" id="6IG5"/>
<dbReference type="PDBsum" id="6IGA"/>
<dbReference type="SMR" id="P9WPY7"/>
<dbReference type="FunCoup" id="P9WPY7">
    <property type="interactions" value="436"/>
</dbReference>
<dbReference type="STRING" id="83332.Rv1659"/>
<dbReference type="PaxDb" id="83332-Rv1659"/>
<dbReference type="DNASU" id="885365"/>
<dbReference type="GeneID" id="885365"/>
<dbReference type="KEGG" id="mtu:Rv1659"/>
<dbReference type="KEGG" id="mtv:RVBD_1659"/>
<dbReference type="TubercuList" id="Rv1659"/>
<dbReference type="eggNOG" id="COG0165">
    <property type="taxonomic scope" value="Bacteria"/>
</dbReference>
<dbReference type="InParanoid" id="P9WPY7"/>
<dbReference type="OrthoDB" id="9769623at2"/>
<dbReference type="PhylomeDB" id="P9WPY7"/>
<dbReference type="BRENDA" id="4.3.2.1">
    <property type="organism ID" value="3445"/>
</dbReference>
<dbReference type="UniPathway" id="UPA00068">
    <property type="reaction ID" value="UER00114"/>
</dbReference>
<dbReference type="Proteomes" id="UP000001584">
    <property type="component" value="Chromosome"/>
</dbReference>
<dbReference type="GO" id="GO:0005829">
    <property type="term" value="C:cytosol"/>
    <property type="evidence" value="ECO:0000318"/>
    <property type="project" value="GO_Central"/>
</dbReference>
<dbReference type="GO" id="GO:0009274">
    <property type="term" value="C:peptidoglycan-based cell wall"/>
    <property type="evidence" value="ECO:0007005"/>
    <property type="project" value="MTBBASE"/>
</dbReference>
<dbReference type="GO" id="GO:0004056">
    <property type="term" value="F:argininosuccinate lyase activity"/>
    <property type="evidence" value="ECO:0000318"/>
    <property type="project" value="GO_Central"/>
</dbReference>
<dbReference type="GO" id="GO:0042450">
    <property type="term" value="P:arginine biosynthetic process via ornithine"/>
    <property type="evidence" value="ECO:0000318"/>
    <property type="project" value="GO_Central"/>
</dbReference>
<dbReference type="GO" id="GO:0006526">
    <property type="term" value="P:L-arginine biosynthetic process"/>
    <property type="evidence" value="ECO:0007669"/>
    <property type="project" value="UniProtKB-UniRule"/>
</dbReference>
<dbReference type="CDD" id="cd01359">
    <property type="entry name" value="Argininosuccinate_lyase"/>
    <property type="match status" value="1"/>
</dbReference>
<dbReference type="FunFam" id="1.10.40.30:FF:000001">
    <property type="entry name" value="Argininosuccinate lyase"/>
    <property type="match status" value="1"/>
</dbReference>
<dbReference type="FunFam" id="1.20.200.10:FF:000015">
    <property type="entry name" value="argininosuccinate lyase isoform X2"/>
    <property type="match status" value="1"/>
</dbReference>
<dbReference type="Gene3D" id="1.10.40.30">
    <property type="entry name" value="Fumarase/aspartase (C-terminal domain)"/>
    <property type="match status" value="1"/>
</dbReference>
<dbReference type="Gene3D" id="1.20.200.10">
    <property type="entry name" value="Fumarase/aspartase (Central domain)"/>
    <property type="match status" value="1"/>
</dbReference>
<dbReference type="Gene3D" id="1.10.275.10">
    <property type="entry name" value="Fumarase/aspartase (N-terminal domain)"/>
    <property type="match status" value="1"/>
</dbReference>
<dbReference type="HAMAP" id="MF_00006">
    <property type="entry name" value="Arg_succ_lyase"/>
    <property type="match status" value="1"/>
</dbReference>
<dbReference type="InterPro" id="IPR029419">
    <property type="entry name" value="Arg_succ_lyase_C"/>
</dbReference>
<dbReference type="InterPro" id="IPR009049">
    <property type="entry name" value="Argininosuccinate_lyase"/>
</dbReference>
<dbReference type="InterPro" id="IPR024083">
    <property type="entry name" value="Fumarase/histidase_N"/>
</dbReference>
<dbReference type="InterPro" id="IPR020557">
    <property type="entry name" value="Fumarate_lyase_CS"/>
</dbReference>
<dbReference type="InterPro" id="IPR000362">
    <property type="entry name" value="Fumarate_lyase_fam"/>
</dbReference>
<dbReference type="InterPro" id="IPR022761">
    <property type="entry name" value="Fumarate_lyase_N"/>
</dbReference>
<dbReference type="InterPro" id="IPR008948">
    <property type="entry name" value="L-Aspartase-like"/>
</dbReference>
<dbReference type="NCBIfam" id="TIGR00838">
    <property type="entry name" value="argH"/>
    <property type="match status" value="1"/>
</dbReference>
<dbReference type="PANTHER" id="PTHR43814">
    <property type="entry name" value="ARGININOSUCCINATE LYASE"/>
    <property type="match status" value="1"/>
</dbReference>
<dbReference type="PANTHER" id="PTHR43814:SF1">
    <property type="entry name" value="ARGININOSUCCINATE LYASE"/>
    <property type="match status" value="1"/>
</dbReference>
<dbReference type="Pfam" id="PF14698">
    <property type="entry name" value="ASL_C2"/>
    <property type="match status" value="1"/>
</dbReference>
<dbReference type="Pfam" id="PF00206">
    <property type="entry name" value="Lyase_1"/>
    <property type="match status" value="1"/>
</dbReference>
<dbReference type="PRINTS" id="PR00145">
    <property type="entry name" value="ARGSUCLYASE"/>
</dbReference>
<dbReference type="PRINTS" id="PR00149">
    <property type="entry name" value="FUMRATELYASE"/>
</dbReference>
<dbReference type="SUPFAM" id="SSF48557">
    <property type="entry name" value="L-aspartase-like"/>
    <property type="match status" value="1"/>
</dbReference>
<dbReference type="PROSITE" id="PS00163">
    <property type="entry name" value="FUMARATE_LYASES"/>
    <property type="match status" value="1"/>
</dbReference>
<gene>
    <name evidence="1" type="primary">argH</name>
    <name type="ordered locus">Rv1659</name>
    <name type="ORF">MTCY06H11.24</name>
</gene>
<organism>
    <name type="scientific">Mycobacterium tuberculosis (strain ATCC 25618 / H37Rv)</name>
    <dbReference type="NCBI Taxonomy" id="83332"/>
    <lineage>
        <taxon>Bacteria</taxon>
        <taxon>Bacillati</taxon>
        <taxon>Actinomycetota</taxon>
        <taxon>Actinomycetes</taxon>
        <taxon>Mycobacteriales</taxon>
        <taxon>Mycobacteriaceae</taxon>
        <taxon>Mycobacterium</taxon>
        <taxon>Mycobacterium tuberculosis complex</taxon>
    </lineage>
</organism>
<name>ARLY_MYCTU</name>
<reference key="1">
    <citation type="journal article" date="1998" name="Nature">
        <title>Deciphering the biology of Mycobacterium tuberculosis from the complete genome sequence.</title>
        <authorList>
            <person name="Cole S.T."/>
            <person name="Brosch R."/>
            <person name="Parkhill J."/>
            <person name="Garnier T."/>
            <person name="Churcher C.M."/>
            <person name="Harris D.E."/>
            <person name="Gordon S.V."/>
            <person name="Eiglmeier K."/>
            <person name="Gas S."/>
            <person name="Barry C.E. III"/>
            <person name="Tekaia F."/>
            <person name="Badcock K."/>
            <person name="Basham D."/>
            <person name="Brown D."/>
            <person name="Chillingworth T."/>
            <person name="Connor R."/>
            <person name="Davies R.M."/>
            <person name="Devlin K."/>
            <person name="Feltwell T."/>
            <person name="Gentles S."/>
            <person name="Hamlin N."/>
            <person name="Holroyd S."/>
            <person name="Hornsby T."/>
            <person name="Jagels K."/>
            <person name="Krogh A."/>
            <person name="McLean J."/>
            <person name="Moule S."/>
            <person name="Murphy L.D."/>
            <person name="Oliver S."/>
            <person name="Osborne J."/>
            <person name="Quail M.A."/>
            <person name="Rajandream M.A."/>
            <person name="Rogers J."/>
            <person name="Rutter S."/>
            <person name="Seeger K."/>
            <person name="Skelton S."/>
            <person name="Squares S."/>
            <person name="Squares R."/>
            <person name="Sulston J.E."/>
            <person name="Taylor K."/>
            <person name="Whitehead S."/>
            <person name="Barrell B.G."/>
        </authorList>
    </citation>
    <scope>NUCLEOTIDE SEQUENCE [LARGE SCALE GENOMIC DNA]</scope>
    <source>
        <strain>ATCC 25618 / H37Rv</strain>
    </source>
</reference>
<reference key="2">
    <citation type="journal article" date="2011" name="Mol. Cell. Proteomics">
        <title>Proteogenomic analysis of Mycobacterium tuberculosis by high resolution mass spectrometry.</title>
        <authorList>
            <person name="Kelkar D.S."/>
            <person name="Kumar D."/>
            <person name="Kumar P."/>
            <person name="Balakrishnan L."/>
            <person name="Muthusamy B."/>
            <person name="Yadav A.K."/>
            <person name="Shrivastava P."/>
            <person name="Marimuthu A."/>
            <person name="Anand S."/>
            <person name="Sundaram H."/>
            <person name="Kingsbury R."/>
            <person name="Harsha H.C."/>
            <person name="Nair B."/>
            <person name="Prasad T.S."/>
            <person name="Chauhan D.S."/>
            <person name="Katoch K."/>
            <person name="Katoch V.M."/>
            <person name="Kumar P."/>
            <person name="Chaerkady R."/>
            <person name="Ramachandran S."/>
            <person name="Dash D."/>
            <person name="Pandey A."/>
        </authorList>
    </citation>
    <scope>IDENTIFICATION BY MASS SPECTROMETRY [LARGE SCALE ANALYSIS]</scope>
    <source>
        <strain>ATCC 25618 / H37Rv</strain>
    </source>
</reference>
<proteinExistence type="evidence at protein level"/>